<reference key="1">
    <citation type="journal article" date="1992" name="J. Gen. Virol.">
        <title>Nucleotide sequence of 21.8 kbp of variola major virus strain Harvey and comparison with vaccinia virus.</title>
        <authorList>
            <person name="Aguado B."/>
            <person name="Selmes I.P."/>
            <person name="Smith G.L."/>
        </authorList>
    </citation>
    <scope>NUCLEOTIDE SEQUENCE [GENOMIC DNA]</scope>
    <source>
        <strain>Harvey</strain>
    </source>
</reference>
<reference key="2">
    <citation type="journal article" date="1993" name="Nature">
        <title>Potential virulence determinants in terminal regions of variola smallpox virus genome.</title>
        <authorList>
            <person name="Massung R.F."/>
            <person name="Esposito J.J."/>
            <person name="Liu L.I."/>
            <person name="Qi J."/>
            <person name="Utterback T.R."/>
            <person name="Knight J.C."/>
            <person name="Aubin L."/>
            <person name="Yuran T.E."/>
            <person name="Parsons J.M."/>
            <person name="Loparev V.N."/>
            <person name="Selivanov N.A."/>
            <person name="Cavallaro K.F."/>
            <person name="Kerlavage A.R."/>
            <person name="Mahy B.W.J."/>
            <person name="Venter J.C."/>
        </authorList>
    </citation>
    <scope>NUCLEOTIDE SEQUENCE [GENOMIC DNA]</scope>
    <source>
        <strain>Bangladesh-1975</strain>
    </source>
</reference>
<dbReference type="EMBL" id="L22579">
    <property type="protein sequence ID" value="AAA60898.1"/>
    <property type="molecule type" value="Genomic_DNA"/>
</dbReference>
<dbReference type="PIR" id="H72169">
    <property type="entry name" value="H72169"/>
</dbReference>
<dbReference type="PIR" id="T28588">
    <property type="entry name" value="T28588"/>
</dbReference>
<dbReference type="RefSeq" id="NP_042198.1">
    <property type="nucleotide sequence ID" value="NC_001611.1"/>
</dbReference>
<dbReference type="GeneID" id="1486529"/>
<dbReference type="KEGG" id="vg:1486529"/>
<dbReference type="Proteomes" id="UP000119805">
    <property type="component" value="Segment"/>
</dbReference>
<dbReference type="GO" id="GO:0033644">
    <property type="term" value="C:host cell membrane"/>
    <property type="evidence" value="ECO:0007669"/>
    <property type="project" value="UniProtKB-SubCell"/>
</dbReference>
<dbReference type="GO" id="GO:0044228">
    <property type="term" value="C:host cell surface"/>
    <property type="evidence" value="ECO:0007669"/>
    <property type="project" value="UniProtKB-SubCell"/>
</dbReference>
<dbReference type="GO" id="GO:0016020">
    <property type="term" value="C:membrane"/>
    <property type="evidence" value="ECO:0007669"/>
    <property type="project" value="UniProtKB-KW"/>
</dbReference>
<dbReference type="InterPro" id="IPR009487">
    <property type="entry name" value="Orthopox_A43R"/>
</dbReference>
<dbReference type="Pfam" id="PF06517">
    <property type="entry name" value="Orthopox_A43R"/>
    <property type="match status" value="1"/>
</dbReference>
<proteinExistence type="inferred from homology"/>
<feature type="signal peptide" evidence="2">
    <location>
        <begin position="1"/>
        <end position="21"/>
    </location>
</feature>
<feature type="chain" id="PRO_0000448166" description="Protein A43">
    <location>
        <begin position="22"/>
        <end position="195"/>
    </location>
</feature>
<feature type="topological domain" description="Extracellular">
    <location>
        <begin position="23"/>
        <end position="166"/>
    </location>
</feature>
<feature type="transmembrane region" description="Helical" evidence="2">
    <location>
        <begin position="167"/>
        <end position="187"/>
    </location>
</feature>
<feature type="topological domain" description="Cytoplasmic">
    <location>
        <begin position="188"/>
        <end position="195"/>
    </location>
</feature>
<feature type="glycosylation site" description="N-linked (GlcNAc...) asparagine; by host" evidence="2">
    <location>
        <position position="66"/>
    </location>
</feature>
<feature type="glycosylation site" description="N-linked (GlcNAc...) asparagine; by host" evidence="2">
    <location>
        <position position="115"/>
    </location>
</feature>
<name>PG172_VARV</name>
<evidence type="ECO:0000250" key="1">
    <source>
        <dbReference type="UniProtKB" id="P26671"/>
    </source>
</evidence>
<evidence type="ECO:0000255" key="2"/>
<evidence type="ECO:0000305" key="3"/>
<accession>P0DSY6</accession>
<accession>P33855</accession>
<organism>
    <name type="scientific">Variola virus</name>
    <dbReference type="NCBI Taxonomy" id="10255"/>
    <lineage>
        <taxon>Viruses</taxon>
        <taxon>Varidnaviria</taxon>
        <taxon>Bamfordvirae</taxon>
        <taxon>Nucleocytoviricota</taxon>
        <taxon>Pokkesviricetes</taxon>
        <taxon>Chitovirales</taxon>
        <taxon>Poxviridae</taxon>
        <taxon>Chordopoxvirinae</taxon>
        <taxon>Orthopoxvirus</taxon>
    </lineage>
</organism>
<organismHost>
    <name type="scientific">Homo sapiens</name>
    <name type="common">Human</name>
    <dbReference type="NCBI Taxonomy" id="9606"/>
</organismHost>
<keyword id="KW-0325">Glycoprotein</keyword>
<keyword id="KW-1043">Host membrane</keyword>
<keyword id="KW-0426">Late protein</keyword>
<keyword id="KW-0472">Membrane</keyword>
<keyword id="KW-0732">Signal</keyword>
<keyword id="KW-0812">Transmembrane</keyword>
<keyword id="KW-1133">Transmembrane helix</keyword>
<gene>
    <name type="primary">OPG172</name>
    <name type="ORF">A43R</name>
    <name type="ORF">A46R</name>
    <name type="ORF">A48R</name>
</gene>
<sequence>MMIKWIISILTMSIMPVLVYSSSIFRFRSEDVELCYGNLYFDRIYNNVVNIKYIPEHIPYKYNFINRTFSVDELDNNVFFTHGYFLKHKYGSLNPSLIVSLSGNLKYNDIQCSVNVSCLIKNLATSISTILTSKHKTYSLHRSKCITIIGYDSIIWYKDINDKYNDIYDFTAICMLIASTLIVTIYVFKKIKMNS</sequence>
<protein>
    <recommendedName>
        <fullName>Protein A43</fullName>
    </recommendedName>
</protein>
<comment type="subcellular location">
    <subcellularLocation>
        <location evidence="1">Host membrane</location>
        <topology evidence="1">Single-pass type I membrane protein</topology>
    </subcellularLocation>
    <subcellularLocation>
        <location evidence="1">Host cell surface</location>
    </subcellularLocation>
</comment>
<comment type="similarity">
    <text evidence="3">Belongs to the orthopoxvirus OPG172 protein family.</text>
</comment>